<sequence length="82" mass="9935">MPPCSSKSILSTKSSMFILVSFALLRFIFYFVEFYRLVIGMNNLEIKRMNQKIVRNSERWEDPFDRIISFHYIDNFKKLFIL</sequence>
<comment type="subcellular location">
    <subcellularLocation>
        <location>Plastid</location>
        <location>Chloroplast</location>
    </subcellularLocation>
</comment>
<organism>
    <name type="scientific">Vicia faba</name>
    <name type="common">Broad bean</name>
    <name type="synonym">Faba vulgaris</name>
    <dbReference type="NCBI Taxonomy" id="3906"/>
    <lineage>
        <taxon>Eukaryota</taxon>
        <taxon>Viridiplantae</taxon>
        <taxon>Streptophyta</taxon>
        <taxon>Embryophyta</taxon>
        <taxon>Tracheophyta</taxon>
        <taxon>Spermatophyta</taxon>
        <taxon>Magnoliopsida</taxon>
        <taxon>eudicotyledons</taxon>
        <taxon>Gunneridae</taxon>
        <taxon>Pentapetalae</taxon>
        <taxon>rosids</taxon>
        <taxon>fabids</taxon>
        <taxon>Fabales</taxon>
        <taxon>Fabaceae</taxon>
        <taxon>Papilionoideae</taxon>
        <taxon>50 kb inversion clade</taxon>
        <taxon>NPAAA clade</taxon>
        <taxon>Hologalegina</taxon>
        <taxon>IRL clade</taxon>
        <taxon>Fabeae</taxon>
        <taxon>Vicia</taxon>
    </lineage>
</organism>
<geneLocation type="chloroplast"/>
<name>YCX1_VICFA</name>
<dbReference type="EMBL" id="X00682">
    <property type="protein sequence ID" value="CAA25290.1"/>
    <property type="molecule type" value="Genomic_DNA"/>
</dbReference>
<dbReference type="PIR" id="S07352">
    <property type="entry name" value="S07352"/>
</dbReference>
<dbReference type="GO" id="GO:0009507">
    <property type="term" value="C:chloroplast"/>
    <property type="evidence" value="ECO:0007669"/>
    <property type="project" value="UniProtKB-SubCell"/>
</dbReference>
<feature type="chain" id="PRO_0000217525" description="Uncharacterized 9.9 kDa protein">
    <location>
        <begin position="1"/>
        <end position="82"/>
    </location>
</feature>
<proteinExistence type="predicted"/>
<reference key="1">
    <citation type="journal article" date="1984" name="Nucleic Acids Res.">
        <title>Nucleotide sequence of a 2 kbp BamH I fragment of Vicia faba chloroplast DNA containing the genes for threonine, glutamic acid and tyrosine transfer RNAs.</title>
        <authorList>
            <person name="Kuntz M."/>
            <person name="Weil J.-H."/>
            <person name="Steinmetz A."/>
        </authorList>
    </citation>
    <scope>NUCLEOTIDE SEQUENCE [GENOMIC DNA]</scope>
</reference>
<accession>P08889</accession>
<keyword id="KW-0150">Chloroplast</keyword>
<keyword id="KW-0934">Plastid</keyword>
<protein>
    <recommendedName>
        <fullName>Uncharacterized 9.9 kDa protein</fullName>
    </recommendedName>
</protein>